<proteinExistence type="inferred from homology"/>
<feature type="chain" id="PRO_0000239597" description="Envelope glycoprotein">
    <location>
        <begin position="1" status="less than"/>
        <end position="211"/>
    </location>
</feature>
<feature type="chain" id="PRO_0000040789" description="Surface protein" evidence="1">
    <location>
        <begin position="1" status="less than"/>
        <end position="10"/>
    </location>
</feature>
<feature type="chain" id="PRO_0000040790" description="Transmembrane protein" evidence="1">
    <location>
        <begin position="11"/>
        <end position="190"/>
    </location>
</feature>
<feature type="peptide" id="PRO_0000040791" description="R-peptide" evidence="1">
    <location>
        <begin position="191"/>
        <end position="211"/>
    </location>
</feature>
<feature type="topological domain" description="Extracellular" evidence="2">
    <location>
        <begin position="1" status="less than"/>
        <end position="151"/>
    </location>
</feature>
<feature type="transmembrane region" description="Helical" evidence="2">
    <location>
        <begin position="152"/>
        <end position="172"/>
    </location>
</feature>
<feature type="topological domain" description="Cytoplasmic" evidence="2">
    <location>
        <begin position="173"/>
        <end position="211"/>
    </location>
</feature>
<feature type="region of interest" description="Fusion peptide" evidence="1">
    <location>
        <begin position="13"/>
        <end position="33"/>
    </location>
</feature>
<feature type="region of interest" description="Immunosuppression" evidence="1">
    <location>
        <begin position="79"/>
        <end position="95"/>
    </location>
</feature>
<feature type="coiled-coil region" evidence="2">
    <location>
        <begin position="41"/>
        <end position="90"/>
    </location>
</feature>
<feature type="coiled-coil region" evidence="2">
    <location>
        <begin position="100"/>
        <end position="136"/>
    </location>
</feature>
<feature type="short sequence motif" description="CX6CC">
    <location>
        <begin position="96"/>
        <end position="104"/>
    </location>
</feature>
<feature type="short sequence motif" description="YXXL motif; contains endocytosis signal" evidence="1">
    <location>
        <begin position="196"/>
        <end position="199"/>
    </location>
</feature>
<feature type="site" description="Cleavage; by host" evidence="1">
    <location>
        <begin position="10"/>
        <end position="11"/>
    </location>
</feature>
<feature type="site" description="Cleavage; by viral protease" evidence="1">
    <location>
        <begin position="190"/>
        <end position="191"/>
    </location>
</feature>
<feature type="lipid moiety-binding region" description="S-palmitoyl cysteine; by host" evidence="1">
    <location>
        <position position="171"/>
    </location>
</feature>
<feature type="non-terminal residue">
    <location>
        <position position="1"/>
    </location>
</feature>
<gene>
    <name type="primary">env</name>
</gene>
<dbReference type="EMBL" id="V01184">
    <property type="protein sequence ID" value="CAA24506.1"/>
    <property type="molecule type" value="Genomic_DNA"/>
</dbReference>
<dbReference type="PIR" id="A03986">
    <property type="entry name" value="A03986"/>
</dbReference>
<dbReference type="SMR" id="P03387"/>
<dbReference type="GO" id="GO:0020002">
    <property type="term" value="C:host cell plasma membrane"/>
    <property type="evidence" value="ECO:0007669"/>
    <property type="project" value="UniProtKB-SubCell"/>
</dbReference>
<dbReference type="GO" id="GO:0016020">
    <property type="term" value="C:membrane"/>
    <property type="evidence" value="ECO:0007669"/>
    <property type="project" value="UniProtKB-KW"/>
</dbReference>
<dbReference type="GO" id="GO:0019031">
    <property type="term" value="C:viral envelope"/>
    <property type="evidence" value="ECO:0007669"/>
    <property type="project" value="UniProtKB-KW"/>
</dbReference>
<dbReference type="GO" id="GO:0055036">
    <property type="term" value="C:virion membrane"/>
    <property type="evidence" value="ECO:0007669"/>
    <property type="project" value="UniProtKB-SubCell"/>
</dbReference>
<dbReference type="GO" id="GO:0019064">
    <property type="term" value="P:fusion of virus membrane with host plasma membrane"/>
    <property type="evidence" value="ECO:0007669"/>
    <property type="project" value="UniProtKB-KW"/>
</dbReference>
<dbReference type="GO" id="GO:0046718">
    <property type="term" value="P:symbiont entry into host cell"/>
    <property type="evidence" value="ECO:0007669"/>
    <property type="project" value="UniProtKB-KW"/>
</dbReference>
<dbReference type="GO" id="GO:0019062">
    <property type="term" value="P:virion attachment to host cell"/>
    <property type="evidence" value="ECO:0007669"/>
    <property type="project" value="UniProtKB-KW"/>
</dbReference>
<dbReference type="CDD" id="cd09851">
    <property type="entry name" value="HTLV-1-like_HR1-HR2"/>
    <property type="match status" value="1"/>
</dbReference>
<dbReference type="FunFam" id="1.10.287.210:FF:000005">
    <property type="entry name" value="Envelope glycoprotein"/>
    <property type="match status" value="1"/>
</dbReference>
<dbReference type="Gene3D" id="1.10.287.210">
    <property type="match status" value="1"/>
</dbReference>
<dbReference type="InterPro" id="IPR018154">
    <property type="entry name" value="TLV/ENV_coat_polyprotein"/>
</dbReference>
<dbReference type="PANTHER" id="PTHR10424:SF72">
    <property type="entry name" value="BC035947 PROTEIN-RELATED"/>
    <property type="match status" value="1"/>
</dbReference>
<dbReference type="PANTHER" id="PTHR10424">
    <property type="entry name" value="VIRAL ENVELOPE PROTEIN"/>
    <property type="match status" value="1"/>
</dbReference>
<dbReference type="Pfam" id="PF00429">
    <property type="entry name" value="TLV_coat"/>
    <property type="match status" value="1"/>
</dbReference>
<dbReference type="SUPFAM" id="SSF58069">
    <property type="entry name" value="Virus ectodomain"/>
    <property type="match status" value="1"/>
</dbReference>
<reference key="1">
    <citation type="journal article" date="1983" name="Cell">
        <title>Analysis of FBJ-MuSV provirus and c-fos (mouse) gene reveals that viral and cellular fos gene products have different carboxy termini.</title>
        <authorList>
            <person name="van Beveren C."/>
            <person name="van Straaten F."/>
            <person name="Curran T."/>
            <person name="Mueller R."/>
            <person name="Verma I.M."/>
        </authorList>
    </citation>
    <scope>NUCLEOTIDE SEQUENCE [GENOMIC DNA]</scope>
</reference>
<organismHost>
    <name type="scientific">Mus musculus</name>
    <name type="common">Mouse</name>
    <dbReference type="NCBI Taxonomy" id="10090"/>
</organismHost>
<comment type="function">
    <text evidence="1">The surface protein (SU) attaches the virus to the host cell by binding to its receptor. This interaction triggers the refolding of the transmembrane protein (TM) and is thought to activate its fusogenic potential by unmasking its fusion peptide. Fusion occurs at the host cell plasma membrane (By similarity).</text>
</comment>
<comment type="function">
    <text evidence="1">The transmembrane protein (TM) acts as a class I viral fusion protein. Under the current model, the protein has at least 3 conformational states: pre-fusion native state, pre-hairpin intermediate state, and post-fusion hairpin state. During viral and target cell membrane fusion, the coiled coil regions (heptad repeats) assume a trimer-of-hairpins structure, positioning the fusion peptide in close proximity to the C-terminal region of the ectodomain. The formation of this structure appears to drive apposition and subsequent fusion of viral and target cell membranes. Membranes fusion leads to delivery of the nucleocapsid into the cytoplasm (By similarity).</text>
</comment>
<comment type="subunit">
    <text evidence="1">The mature envelope protein (Env) consists of a trimer of SU-TM heterodimers attached by a labile interchain disulfide bond.</text>
</comment>
<comment type="subcellular location">
    <molecule>Transmembrane protein</molecule>
    <subcellularLocation>
        <location evidence="1">Virion membrane</location>
        <topology evidence="1">Single-pass type I membrane protein</topology>
    </subcellularLocation>
    <subcellularLocation>
        <location evidence="1">Host cell membrane</location>
        <topology evidence="1">Single-pass type I membrane protein</topology>
    </subcellularLocation>
</comment>
<comment type="subcellular location">
    <molecule>Surface protein</molecule>
    <subcellularLocation>
        <location>Virion membrane</location>
        <topology>Peripheral membrane protein</topology>
    </subcellularLocation>
    <subcellularLocation>
        <location evidence="1">Host cell membrane</location>
        <topology evidence="1">Peripheral membrane protein</topology>
    </subcellularLocation>
    <text evidence="1">The surface protein is not anchored to the viral envelope, but associates with the extravirion surface through its binding to TM. Both proteins are thought to be concentrated at the site of budding and incorporated into the virions possibly by contacts between the cytoplasmic tail of Env and the N-terminus of Gag (By similarity).</text>
</comment>
<comment type="subcellular location">
    <molecule>R-peptide</molecule>
    <subcellularLocation>
        <location evidence="1">Host cell membrane</location>
        <topology evidence="1">Peripheral membrane protein</topology>
    </subcellularLocation>
    <text evidence="1">The R-peptide is membrane-associated through its palmitate.</text>
</comment>
<comment type="domain">
    <text evidence="1">The YXXL motif is involved in determining the exact site of viral release at the surface of infected mononuclear cells and promotes endocytosis.</text>
</comment>
<comment type="domain">
    <text evidence="1">The 17 amino acids long immunosuppressive region is present in many retroviral envelope proteins. Synthetic peptides derived from this relatively conserved sequence inhibit immune function in vitro and in vivo (By similarity).</text>
</comment>
<comment type="PTM">
    <text evidence="1">Specific enzymatic cleavages in vivo yield mature proteins. Envelope glycoproteins are synthesized as an inactive precursor that is N-glycosylated and processed likely by host cell furin or by a furin-like protease in the Golgi to yield the mature SU and TM proteins. The cleavage site between SU and TM requires the minimal sequence [KR]-X-[KR]-R. The R-peptide is released from the C-terminus of the cytoplasmic tail of the TM protein upon particle formation as a result of proteolytic cleavage by the viral protease. Cleavage of this peptide is required for TM to become fusogenic (By similarity).</text>
</comment>
<comment type="PTM">
    <text evidence="1">The CXXC motif is highly conserved across a broad range of retroviral envelope proteins. It is thought to participate in the formation of a labile disulfide bond possibly with the CX6CC motif present in the transmembrane protein. Isomerization of the intersubunit disulfide bond to an SU intrachain disulfide bond is thought to occur upon receptor recognition in order to allow membrane fusion (By similarity).</text>
</comment>
<comment type="PTM">
    <text evidence="1">The transmembrane protein is palmitoylated.</text>
</comment>
<comment type="PTM">
    <text evidence="1">The R-peptide is palmitoylated.</text>
</comment>
<accession>P03387</accession>
<keyword id="KW-0165">Cleavage on pair of basic residues</keyword>
<keyword id="KW-0175">Coiled coil</keyword>
<keyword id="KW-1015">Disulfide bond</keyword>
<keyword id="KW-1169">Fusion of virus membrane with host cell membrane</keyword>
<keyword id="KW-1168">Fusion of virus membrane with host membrane</keyword>
<keyword id="KW-0325">Glycoprotein</keyword>
<keyword id="KW-1032">Host cell membrane</keyword>
<keyword id="KW-1043">Host membrane</keyword>
<keyword id="KW-0945">Host-virus interaction</keyword>
<keyword id="KW-0449">Lipoprotein</keyword>
<keyword id="KW-0472">Membrane</keyword>
<keyword id="KW-0564">Palmitate</keyword>
<keyword id="KW-0812">Transmembrane</keyword>
<keyword id="KW-1133">Transmembrane helix</keyword>
<keyword id="KW-1161">Viral attachment to host cell</keyword>
<keyword id="KW-0261">Viral envelope protein</keyword>
<keyword id="KW-1162">Viral penetration into host cytoplasm</keyword>
<keyword id="KW-0946">Virion</keyword>
<keyword id="KW-1160">Virus entry into host cell</keyword>
<protein>
    <recommendedName>
        <fullName>Envelope glycoprotein</fullName>
    </recommendedName>
    <alternativeName>
        <fullName>Env polyprotein</fullName>
    </alternativeName>
    <component>
        <recommendedName>
            <fullName>Surface protein</fullName>
            <shortName>SU</shortName>
        </recommendedName>
        <alternativeName>
            <fullName>Glycoprotein 70</fullName>
            <shortName>gp70</shortName>
        </alternativeName>
    </component>
    <component>
        <recommendedName>
            <fullName>Transmembrane protein</fullName>
            <shortName>TM</shortName>
        </recommendedName>
        <alternativeName>
            <fullName>Envelope protein p15E</fullName>
        </alternativeName>
    </component>
    <component>
        <recommendedName>
            <fullName>R-peptide</fullName>
        </recommendedName>
        <alternativeName>
            <fullName>p2E</fullName>
        </alternativeName>
    </component>
</protein>
<sequence length="211" mass="23708">QFKRRAKYKREPVSLTLALLLGGLTMGGIAAGVGTGTTALVATQQFQQLQAAMHDDLKKVEKSITNLEKSLTSLSEVVLQNRRGLDLLFLKEGGLCAALKEECCFYADHTGLVRDSMAKLRERLSQRQKLFESQQGWFEGLFNKSPWFTTLISTIMGPLIILLLILLFGPCILNRLVQFIKDRISVVQALVLTQQYHQLKSIDPEKVESRE</sequence>
<organism>
    <name type="scientific">FBJ murine osteosarcoma virus</name>
    <name type="common">FBJ-MSV</name>
    <name type="synonym">Finkel-Biskis-Jinkins murine osteosarcoma virus</name>
    <dbReference type="NCBI Taxonomy" id="11805"/>
    <lineage>
        <taxon>Viruses</taxon>
        <taxon>Riboviria</taxon>
        <taxon>Pararnavirae</taxon>
        <taxon>Artverviricota</taxon>
        <taxon>Revtraviricetes</taxon>
        <taxon>Ortervirales</taxon>
        <taxon>Retroviridae</taxon>
        <taxon>Orthoretrovirinae</taxon>
        <taxon>Gammaretrovirus</taxon>
        <taxon>Moloney murine sarcoma virus</taxon>
    </lineage>
</organism>
<name>ENV_MSVFB</name>
<evidence type="ECO:0000250" key="1"/>
<evidence type="ECO:0000255" key="2"/>